<protein>
    <recommendedName>
        <fullName evidence="3">Ocellatin-PT7</fullName>
    </recommendedName>
</protein>
<keyword id="KW-0878">Amphibian defense peptide</keyword>
<keyword id="KW-0044">Antibiotic</keyword>
<keyword id="KW-0929">Antimicrobial</keyword>
<keyword id="KW-0165">Cleavage on pair of basic residues</keyword>
<keyword id="KW-0903">Direct protein sequencing</keyword>
<keyword id="KW-0964">Secreted</keyword>
<keyword id="KW-0732">Signal</keyword>
<accession>C0HK02</accession>
<dbReference type="GO" id="GO:0005576">
    <property type="term" value="C:extracellular region"/>
    <property type="evidence" value="ECO:0007669"/>
    <property type="project" value="UniProtKB-SubCell"/>
</dbReference>
<dbReference type="GO" id="GO:0042742">
    <property type="term" value="P:defense response to bacterium"/>
    <property type="evidence" value="ECO:0007669"/>
    <property type="project" value="UniProtKB-KW"/>
</dbReference>
<dbReference type="GO" id="GO:0019836">
    <property type="term" value="P:symbiont-mediated hemolysis of host erythrocyte"/>
    <property type="evidence" value="ECO:0007669"/>
    <property type="project" value="InterPro"/>
</dbReference>
<dbReference type="InterPro" id="IPR012518">
    <property type="entry name" value="Antimicrobial15"/>
</dbReference>
<dbReference type="InterPro" id="IPR004275">
    <property type="entry name" value="Frog_antimicrobial_propeptide"/>
</dbReference>
<dbReference type="InterPro" id="IPR016322">
    <property type="entry name" value="FSAP"/>
</dbReference>
<dbReference type="Pfam" id="PF08110">
    <property type="entry name" value="Antimicrobial15"/>
    <property type="match status" value="1"/>
</dbReference>
<dbReference type="Pfam" id="PF03032">
    <property type="entry name" value="FSAP_sig_propep"/>
    <property type="match status" value="1"/>
</dbReference>
<dbReference type="PIRSF" id="PIRSF001822">
    <property type="entry name" value="Dermaseptin_precursor"/>
    <property type="match status" value="1"/>
</dbReference>
<sequence length="73" mass="8097">MAFLKKSLFLVLFLGLVSLSICDEEKRQDEDDDDDDDEEKRGVFDIIKGAGKQLIAHAMGKIAEKVGLNKDGN</sequence>
<comment type="function">
    <text evidence="2">Has antibacterial activity against Gram-negative bacteria E.coli ATCC 25922 (MIC=60 uM) and S.choleraesuis ATCC 14028 (MIC=240 uM) and against Gram-positive bacterium S.aureus ATCC 29313 (MIC=240 uM). Shows no hemolytic activity and no cytotoxicity.</text>
</comment>
<comment type="subcellular location">
    <subcellularLocation>
        <location evidence="2">Secreted</location>
    </subcellularLocation>
</comment>
<comment type="tissue specificity">
    <text evidence="5">Expressed by the skin glands.</text>
</comment>
<comment type="mass spectrometry" mass="3293.69" method="MALDI" evidence="2"/>
<comment type="similarity">
    <text evidence="4">Belongs to the frog skin active peptide (FSAP) family. Ocellatin subfamily.</text>
</comment>
<comment type="online information" name="The antimicrobial peptide database">
    <link uri="https://wangapd3.com/database/query_output.php?ID=02599"/>
</comment>
<feature type="signal peptide" evidence="1">
    <location>
        <begin position="1"/>
        <end position="22"/>
    </location>
</feature>
<feature type="propeptide" id="PRO_0000436220" evidence="4">
    <location>
        <begin position="23"/>
        <end position="39"/>
    </location>
</feature>
<feature type="peptide" id="PRO_0000436221" description="Ocellatin-PT7" evidence="2">
    <location>
        <begin position="42"/>
        <end position="73"/>
    </location>
</feature>
<name>OCE7_LEPPU</name>
<proteinExistence type="evidence at protein level"/>
<organism>
    <name type="scientific">Leptodactylus pustulatus</name>
    <name type="common">Ceara white-lipped frog</name>
    <dbReference type="NCBI Taxonomy" id="1349691"/>
    <lineage>
        <taxon>Eukaryota</taxon>
        <taxon>Metazoa</taxon>
        <taxon>Chordata</taxon>
        <taxon>Craniata</taxon>
        <taxon>Vertebrata</taxon>
        <taxon>Euteleostomi</taxon>
        <taxon>Amphibia</taxon>
        <taxon>Batrachia</taxon>
        <taxon>Anura</taxon>
        <taxon>Neobatrachia</taxon>
        <taxon>Hyloidea</taxon>
        <taxon>Leptodactylidae</taxon>
        <taxon>Leptodactylinae</taxon>
        <taxon>Leptodactylus</taxon>
    </lineage>
</organism>
<evidence type="ECO:0000255" key="1"/>
<evidence type="ECO:0000269" key="2">
    <source>
    </source>
</evidence>
<evidence type="ECO:0000303" key="3">
    <source>
    </source>
</evidence>
<evidence type="ECO:0000305" key="4"/>
<evidence type="ECO:0000305" key="5">
    <source>
    </source>
</evidence>
<reference evidence="4" key="1">
    <citation type="journal article" date="2015" name="J. Nat. Prod.">
        <title>Characterization and biological activities of ocellatin peptides from the skin secretion of the frog Leptodactylus pustulatus.</title>
        <authorList>
            <person name="Marani M.M."/>
            <person name="Dourado F.S."/>
            <person name="Quelemes P.V."/>
            <person name="de Araujo A.R."/>
            <person name="Perfeito M.L."/>
            <person name="Barbosa E.A."/>
            <person name="Veras L.M."/>
            <person name="Coelho A.L."/>
            <person name="Andrade E.B."/>
            <person name="Eaton P."/>
            <person name="Longo J.P."/>
            <person name="Azevedo R.B."/>
            <person name="Delerue-Matos C."/>
            <person name="Leite J.R."/>
        </authorList>
    </citation>
    <scope>NUCLEOTIDE SEQUENCE [MRNA]</scope>
    <scope>PROTEIN SEQUENCE OF 42-73</scope>
    <scope>FUNCTION</scope>
    <scope>SUBCELLULAR LOCATION</scope>
    <scope>MASS SPECTROMETRY</scope>
    <scope>IDENTIFICATION BY MASS SPECTROMETRY</scope>
    <source>
        <tissue evidence="3">Skin secretion</tissue>
    </source>
</reference>